<keyword id="KW-0143">Chaperone</keyword>
<keyword id="KW-0963">Cytoplasm</keyword>
<keyword id="KW-0449">Lipoprotein</keyword>
<keyword id="KW-0479">Metal-binding</keyword>
<keyword id="KW-0488">Methylation</keyword>
<keyword id="KW-0539">Nucleus</keyword>
<keyword id="KW-0636">Prenylation</keyword>
<keyword id="KW-0653">Protein transport</keyword>
<keyword id="KW-1185">Reference proteome</keyword>
<keyword id="KW-0677">Repeat</keyword>
<keyword id="KW-0813">Transport</keyword>
<keyword id="KW-0862">Zinc</keyword>
<keyword id="KW-0863">Zinc-finger</keyword>
<accession>O74752</accession>
<comment type="function">
    <text evidence="1 3">Probably involved in mitochondrial protein import (By similarity). Plays a role in microtubule cytoskeleton organization.</text>
</comment>
<comment type="subunit">
    <text evidence="1">Homodimer.</text>
</comment>
<comment type="subcellular location">
    <subcellularLocation>
        <location evidence="4">Cytoplasm</location>
    </subcellularLocation>
    <subcellularLocation>
        <location evidence="4">Nucleus</location>
    </subcellularLocation>
</comment>
<feature type="chain" id="PRO_0000314107" description="Mitochondrial protein import protein mas5">
    <location>
        <begin position="1"/>
        <end position="404"/>
    </location>
</feature>
<feature type="propeptide" id="PRO_0000396683" description="Removed in mature form" evidence="1">
    <location>
        <begin position="405"/>
        <end position="407"/>
    </location>
</feature>
<feature type="domain" description="J">
    <location>
        <begin position="6"/>
        <end position="68"/>
    </location>
</feature>
<feature type="repeat" description="CXXCXGXG motif">
    <location>
        <begin position="137"/>
        <end position="144"/>
    </location>
</feature>
<feature type="repeat" description="CXXCXGXG motif">
    <location>
        <begin position="153"/>
        <end position="160"/>
    </location>
</feature>
<feature type="repeat" description="CXXCXGXG motif">
    <location>
        <begin position="179"/>
        <end position="186"/>
    </location>
</feature>
<feature type="repeat" description="CXXCXGXG motif">
    <location>
        <begin position="195"/>
        <end position="202"/>
    </location>
</feature>
<feature type="zinc finger region" description="CR-type">
    <location>
        <begin position="124"/>
        <end position="207"/>
    </location>
</feature>
<feature type="region of interest" description="Disordered" evidence="2">
    <location>
        <begin position="375"/>
        <end position="407"/>
    </location>
</feature>
<feature type="binding site" evidence="1">
    <location>
        <position position="110"/>
    </location>
    <ligand>
        <name>substrate</name>
    </ligand>
</feature>
<feature type="binding site" evidence="1">
    <location>
        <begin position="129"/>
        <end position="131"/>
    </location>
    <ligand>
        <name>substrate</name>
    </ligand>
</feature>
<feature type="binding site" evidence="1">
    <location>
        <position position="137"/>
    </location>
    <ligand>
        <name>Zn(2+)</name>
        <dbReference type="ChEBI" id="CHEBI:29105"/>
        <label>1</label>
    </ligand>
</feature>
<feature type="binding site" evidence="1">
    <location>
        <position position="140"/>
    </location>
    <ligand>
        <name>Zn(2+)</name>
        <dbReference type="ChEBI" id="CHEBI:29105"/>
        <label>1</label>
    </ligand>
</feature>
<feature type="binding site" evidence="1">
    <location>
        <position position="153"/>
    </location>
    <ligand>
        <name>Zn(2+)</name>
        <dbReference type="ChEBI" id="CHEBI:29105"/>
        <label>2</label>
    </ligand>
</feature>
<feature type="binding site" evidence="1">
    <location>
        <position position="156"/>
    </location>
    <ligand>
        <name>Zn(2+)</name>
        <dbReference type="ChEBI" id="CHEBI:29105"/>
        <label>2</label>
    </ligand>
</feature>
<feature type="binding site" evidence="1">
    <location>
        <position position="179"/>
    </location>
    <ligand>
        <name>Zn(2+)</name>
        <dbReference type="ChEBI" id="CHEBI:29105"/>
        <label>2</label>
    </ligand>
</feature>
<feature type="binding site" evidence="1">
    <location>
        <position position="182"/>
    </location>
    <ligand>
        <name>Zn(2+)</name>
        <dbReference type="ChEBI" id="CHEBI:29105"/>
        <label>2</label>
    </ligand>
</feature>
<feature type="binding site" evidence="1">
    <location>
        <position position="195"/>
    </location>
    <ligand>
        <name>Zn(2+)</name>
        <dbReference type="ChEBI" id="CHEBI:29105"/>
        <label>1</label>
    </ligand>
</feature>
<feature type="binding site" evidence="1">
    <location>
        <position position="198"/>
    </location>
    <ligand>
        <name>Zn(2+)</name>
        <dbReference type="ChEBI" id="CHEBI:29105"/>
        <label>1</label>
    </ligand>
</feature>
<feature type="binding site" evidence="1">
    <location>
        <begin position="209"/>
        <end position="210"/>
    </location>
    <ligand>
        <name>substrate</name>
    </ligand>
</feature>
<feature type="binding site" evidence="1">
    <location>
        <begin position="241"/>
        <end position="243"/>
    </location>
    <ligand>
        <name>substrate</name>
    </ligand>
</feature>
<feature type="site" description="Involved in dimerization" evidence="1">
    <location>
        <position position="329"/>
    </location>
</feature>
<feature type="modified residue" description="Cysteine methyl ester" evidence="1">
    <location>
        <position position="404"/>
    </location>
</feature>
<feature type="lipid moiety-binding region" description="S-farnesyl cysteine" evidence="1">
    <location>
        <position position="404"/>
    </location>
</feature>
<proteinExistence type="inferred from homology"/>
<reference key="1">
    <citation type="journal article" date="2002" name="Nature">
        <title>The genome sequence of Schizosaccharomyces pombe.</title>
        <authorList>
            <person name="Wood V."/>
            <person name="Gwilliam R."/>
            <person name="Rajandream M.A."/>
            <person name="Lyne M.H."/>
            <person name="Lyne R."/>
            <person name="Stewart A."/>
            <person name="Sgouros J.G."/>
            <person name="Peat N."/>
            <person name="Hayles J."/>
            <person name="Baker S.G."/>
            <person name="Basham D."/>
            <person name="Bowman S."/>
            <person name="Brooks K."/>
            <person name="Brown D."/>
            <person name="Brown S."/>
            <person name="Chillingworth T."/>
            <person name="Churcher C.M."/>
            <person name="Collins M."/>
            <person name="Connor R."/>
            <person name="Cronin A."/>
            <person name="Davis P."/>
            <person name="Feltwell T."/>
            <person name="Fraser A."/>
            <person name="Gentles S."/>
            <person name="Goble A."/>
            <person name="Hamlin N."/>
            <person name="Harris D.E."/>
            <person name="Hidalgo J."/>
            <person name="Hodgson G."/>
            <person name="Holroyd S."/>
            <person name="Hornsby T."/>
            <person name="Howarth S."/>
            <person name="Huckle E.J."/>
            <person name="Hunt S."/>
            <person name="Jagels K."/>
            <person name="James K.D."/>
            <person name="Jones L."/>
            <person name="Jones M."/>
            <person name="Leather S."/>
            <person name="McDonald S."/>
            <person name="McLean J."/>
            <person name="Mooney P."/>
            <person name="Moule S."/>
            <person name="Mungall K.L."/>
            <person name="Murphy L.D."/>
            <person name="Niblett D."/>
            <person name="Odell C."/>
            <person name="Oliver K."/>
            <person name="O'Neil S."/>
            <person name="Pearson D."/>
            <person name="Quail M.A."/>
            <person name="Rabbinowitsch E."/>
            <person name="Rutherford K.M."/>
            <person name="Rutter S."/>
            <person name="Saunders D."/>
            <person name="Seeger K."/>
            <person name="Sharp S."/>
            <person name="Skelton J."/>
            <person name="Simmonds M.N."/>
            <person name="Squares R."/>
            <person name="Squares S."/>
            <person name="Stevens K."/>
            <person name="Taylor K."/>
            <person name="Taylor R.G."/>
            <person name="Tivey A."/>
            <person name="Walsh S.V."/>
            <person name="Warren T."/>
            <person name="Whitehead S."/>
            <person name="Woodward J.R."/>
            <person name="Volckaert G."/>
            <person name="Aert R."/>
            <person name="Robben J."/>
            <person name="Grymonprez B."/>
            <person name="Weltjens I."/>
            <person name="Vanstreels E."/>
            <person name="Rieger M."/>
            <person name="Schaefer M."/>
            <person name="Mueller-Auer S."/>
            <person name="Gabel C."/>
            <person name="Fuchs M."/>
            <person name="Duesterhoeft A."/>
            <person name="Fritzc C."/>
            <person name="Holzer E."/>
            <person name="Moestl D."/>
            <person name="Hilbert H."/>
            <person name="Borzym K."/>
            <person name="Langer I."/>
            <person name="Beck A."/>
            <person name="Lehrach H."/>
            <person name="Reinhardt R."/>
            <person name="Pohl T.M."/>
            <person name="Eger P."/>
            <person name="Zimmermann W."/>
            <person name="Wedler H."/>
            <person name="Wambutt R."/>
            <person name="Purnelle B."/>
            <person name="Goffeau A."/>
            <person name="Cadieu E."/>
            <person name="Dreano S."/>
            <person name="Gloux S."/>
            <person name="Lelaure V."/>
            <person name="Mottier S."/>
            <person name="Galibert F."/>
            <person name="Aves S.J."/>
            <person name="Xiang Z."/>
            <person name="Hunt C."/>
            <person name="Moore K."/>
            <person name="Hurst S.M."/>
            <person name="Lucas M."/>
            <person name="Rochet M."/>
            <person name="Gaillardin C."/>
            <person name="Tallada V.A."/>
            <person name="Garzon A."/>
            <person name="Thode G."/>
            <person name="Daga R.R."/>
            <person name="Cruzado L."/>
            <person name="Jimenez J."/>
            <person name="Sanchez M."/>
            <person name="del Rey F."/>
            <person name="Benito J."/>
            <person name="Dominguez A."/>
            <person name="Revuelta J.L."/>
            <person name="Moreno S."/>
            <person name="Armstrong J."/>
            <person name="Forsburg S.L."/>
            <person name="Cerutti L."/>
            <person name="Lowe T."/>
            <person name="McCombie W.R."/>
            <person name="Paulsen I."/>
            <person name="Potashkin J."/>
            <person name="Shpakovski G.V."/>
            <person name="Ussery D."/>
            <person name="Barrell B.G."/>
            <person name="Nurse P."/>
        </authorList>
    </citation>
    <scope>NUCLEOTIDE SEQUENCE [LARGE SCALE GENOMIC DNA]</scope>
    <source>
        <strain>972 / ATCC 24843</strain>
    </source>
</reference>
<reference key="2">
    <citation type="journal article" date="2005" name="J. Cell Sci.">
        <title>The nuclear rim protein Amo1 is required for proper microtubule cytoskeleton organisation in fission yeast.</title>
        <authorList>
            <person name="Pardo M."/>
            <person name="Nurse P."/>
        </authorList>
    </citation>
    <scope>FUNCTION</scope>
</reference>
<reference key="3">
    <citation type="journal article" date="2006" name="Nat. Biotechnol.">
        <title>ORFeome cloning and global analysis of protein localization in the fission yeast Schizosaccharomyces pombe.</title>
        <authorList>
            <person name="Matsuyama A."/>
            <person name="Arai R."/>
            <person name="Yashiroda Y."/>
            <person name="Shirai A."/>
            <person name="Kamata A."/>
            <person name="Sekido S."/>
            <person name="Kobayashi Y."/>
            <person name="Hashimoto A."/>
            <person name="Hamamoto M."/>
            <person name="Hiraoka Y."/>
            <person name="Horinouchi S."/>
            <person name="Yoshida M."/>
        </authorList>
    </citation>
    <scope>SUBCELLULAR LOCATION [LARGE SCALE ANALYSIS]</scope>
</reference>
<dbReference type="EMBL" id="CU329671">
    <property type="protein sequence ID" value="CAA21305.1"/>
    <property type="molecule type" value="Genomic_DNA"/>
</dbReference>
<dbReference type="PIR" id="T39658">
    <property type="entry name" value="T39658"/>
</dbReference>
<dbReference type="RefSeq" id="NP_595428.1">
    <property type="nucleotide sequence ID" value="NM_001021336.2"/>
</dbReference>
<dbReference type="SMR" id="O74752"/>
<dbReference type="BioGRID" id="276226">
    <property type="interactions" value="18"/>
</dbReference>
<dbReference type="FunCoup" id="O74752">
    <property type="interactions" value="756"/>
</dbReference>
<dbReference type="IntAct" id="O74752">
    <property type="interactions" value="1"/>
</dbReference>
<dbReference type="STRING" id="284812.O74752"/>
<dbReference type="iPTMnet" id="O74752"/>
<dbReference type="PaxDb" id="4896-SPBC1734.11.1"/>
<dbReference type="EnsemblFungi" id="SPBC1734.11.1">
    <property type="protein sequence ID" value="SPBC1734.11.1:pep"/>
    <property type="gene ID" value="SPBC1734.11"/>
</dbReference>
<dbReference type="GeneID" id="2539671"/>
<dbReference type="KEGG" id="spo:2539671"/>
<dbReference type="PomBase" id="SPBC1734.11">
    <property type="gene designation" value="mas5"/>
</dbReference>
<dbReference type="VEuPathDB" id="FungiDB:SPBC1734.11"/>
<dbReference type="eggNOG" id="KOG0712">
    <property type="taxonomic scope" value="Eukaryota"/>
</dbReference>
<dbReference type="HOGENOM" id="CLU_017633_10_0_1"/>
<dbReference type="InParanoid" id="O74752"/>
<dbReference type="OMA" id="RVCPTCV"/>
<dbReference type="PhylomeDB" id="O74752"/>
<dbReference type="Reactome" id="R-SPO-3371497">
    <property type="pathway name" value="HSP90 chaperone cycle for steroid hormone receptors (SHR) in the presence of ligand"/>
</dbReference>
<dbReference type="Reactome" id="R-SPO-9841251">
    <property type="pathway name" value="Mitochondrial unfolded protein response (UPRmt)"/>
</dbReference>
<dbReference type="PRO" id="PR:O74752"/>
<dbReference type="Proteomes" id="UP000002485">
    <property type="component" value="Chromosome II"/>
</dbReference>
<dbReference type="GO" id="GO:0005737">
    <property type="term" value="C:cytoplasm"/>
    <property type="evidence" value="ECO:0000318"/>
    <property type="project" value="GO_Central"/>
</dbReference>
<dbReference type="GO" id="GO:0005829">
    <property type="term" value="C:cytosol"/>
    <property type="evidence" value="ECO:0000314"/>
    <property type="project" value="PomBase"/>
</dbReference>
<dbReference type="GO" id="GO:0140602">
    <property type="term" value="C:nucleolar peripheral inclusion body"/>
    <property type="evidence" value="ECO:0000314"/>
    <property type="project" value="PomBase"/>
</dbReference>
<dbReference type="GO" id="GO:0005634">
    <property type="term" value="C:nucleus"/>
    <property type="evidence" value="ECO:0007005"/>
    <property type="project" value="PomBase"/>
</dbReference>
<dbReference type="GO" id="GO:0140453">
    <property type="term" value="C:protein aggregate center"/>
    <property type="evidence" value="ECO:0000314"/>
    <property type="project" value="PomBase"/>
</dbReference>
<dbReference type="GO" id="GO:0005524">
    <property type="term" value="F:ATP binding"/>
    <property type="evidence" value="ECO:0007669"/>
    <property type="project" value="InterPro"/>
</dbReference>
<dbReference type="GO" id="GO:0030544">
    <property type="term" value="F:Hsp70 protein binding"/>
    <property type="evidence" value="ECO:0000255"/>
    <property type="project" value="PomBase"/>
</dbReference>
<dbReference type="GO" id="GO:0140311">
    <property type="term" value="F:protein sequestering activity"/>
    <property type="evidence" value="ECO:0000269"/>
    <property type="project" value="PomBase"/>
</dbReference>
<dbReference type="GO" id="GO:0051087">
    <property type="term" value="F:protein-folding chaperone binding"/>
    <property type="evidence" value="ECO:0000318"/>
    <property type="project" value="GO_Central"/>
</dbReference>
<dbReference type="GO" id="GO:0051082">
    <property type="term" value="F:unfolded protein binding"/>
    <property type="evidence" value="ECO:0007669"/>
    <property type="project" value="InterPro"/>
</dbReference>
<dbReference type="GO" id="GO:0008270">
    <property type="term" value="F:zinc ion binding"/>
    <property type="evidence" value="ECO:0007669"/>
    <property type="project" value="UniProtKB-KW"/>
</dbReference>
<dbReference type="GO" id="GO:0034605">
    <property type="term" value="P:cellular response to heat"/>
    <property type="evidence" value="ECO:0000315"/>
    <property type="project" value="PomBase"/>
</dbReference>
<dbReference type="GO" id="GO:0140455">
    <property type="term" value="P:cytoplasm protein quality control"/>
    <property type="evidence" value="ECO:0000315"/>
    <property type="project" value="PomBase"/>
</dbReference>
<dbReference type="GO" id="GO:0140454">
    <property type="term" value="P:protein aggregate center assembly"/>
    <property type="evidence" value="ECO:0000315"/>
    <property type="project" value="PomBase"/>
</dbReference>
<dbReference type="GO" id="GO:0042026">
    <property type="term" value="P:protein refolding"/>
    <property type="evidence" value="ECO:0000315"/>
    <property type="project" value="PomBase"/>
</dbReference>
<dbReference type="GO" id="GO:0015031">
    <property type="term" value="P:protein transport"/>
    <property type="evidence" value="ECO:0007669"/>
    <property type="project" value="UniProtKB-KW"/>
</dbReference>
<dbReference type="CDD" id="cd06257">
    <property type="entry name" value="DnaJ"/>
    <property type="match status" value="1"/>
</dbReference>
<dbReference type="CDD" id="cd10747">
    <property type="entry name" value="DnaJ_C"/>
    <property type="match status" value="1"/>
</dbReference>
<dbReference type="CDD" id="cd10719">
    <property type="entry name" value="DnaJ_zf"/>
    <property type="match status" value="1"/>
</dbReference>
<dbReference type="FunFam" id="1.10.287.110:FF:000016">
    <property type="entry name" value="DnaJ (Hsp40) homolog, subfamily A, member 2"/>
    <property type="match status" value="1"/>
</dbReference>
<dbReference type="FunFam" id="2.60.260.20:FF:000064">
    <property type="entry name" value="DNAJ domain-containing protein Mas5"/>
    <property type="match status" value="1"/>
</dbReference>
<dbReference type="FunFam" id="2.10.230.10:FF:000001">
    <property type="entry name" value="DnaJ subfamily A member 2"/>
    <property type="match status" value="1"/>
</dbReference>
<dbReference type="Gene3D" id="1.10.287.110">
    <property type="entry name" value="DnaJ domain"/>
    <property type="match status" value="1"/>
</dbReference>
<dbReference type="Gene3D" id="2.10.230.10">
    <property type="entry name" value="Heat shock protein DnaJ, cysteine-rich domain"/>
    <property type="match status" value="1"/>
</dbReference>
<dbReference type="Gene3D" id="2.60.260.20">
    <property type="entry name" value="Urease metallochaperone UreE, N-terminal domain"/>
    <property type="match status" value="2"/>
</dbReference>
<dbReference type="HAMAP" id="MF_01152">
    <property type="entry name" value="DnaJ"/>
    <property type="match status" value="1"/>
</dbReference>
<dbReference type="InterPro" id="IPR012724">
    <property type="entry name" value="DnaJ"/>
</dbReference>
<dbReference type="InterPro" id="IPR002939">
    <property type="entry name" value="DnaJ_C"/>
</dbReference>
<dbReference type="InterPro" id="IPR001623">
    <property type="entry name" value="DnaJ_domain"/>
</dbReference>
<dbReference type="InterPro" id="IPR018253">
    <property type="entry name" value="DnaJ_domain_CS"/>
</dbReference>
<dbReference type="InterPro" id="IPR044713">
    <property type="entry name" value="DNJA1/2-like"/>
</dbReference>
<dbReference type="InterPro" id="IPR008971">
    <property type="entry name" value="HSP40/DnaJ_pept-bd"/>
</dbReference>
<dbReference type="InterPro" id="IPR001305">
    <property type="entry name" value="HSP_DnaJ_Cys-rich_dom"/>
</dbReference>
<dbReference type="InterPro" id="IPR036410">
    <property type="entry name" value="HSP_DnaJ_Cys-rich_dom_sf"/>
</dbReference>
<dbReference type="InterPro" id="IPR036869">
    <property type="entry name" value="J_dom_sf"/>
</dbReference>
<dbReference type="PANTHER" id="PTHR43888">
    <property type="entry name" value="DNAJ-LIKE-2, ISOFORM A-RELATED"/>
    <property type="match status" value="1"/>
</dbReference>
<dbReference type="Pfam" id="PF00226">
    <property type="entry name" value="DnaJ"/>
    <property type="match status" value="1"/>
</dbReference>
<dbReference type="Pfam" id="PF01556">
    <property type="entry name" value="DnaJ_C"/>
    <property type="match status" value="1"/>
</dbReference>
<dbReference type="Pfam" id="PF00684">
    <property type="entry name" value="DnaJ_CXXCXGXG"/>
    <property type="match status" value="1"/>
</dbReference>
<dbReference type="PRINTS" id="PR00625">
    <property type="entry name" value="JDOMAIN"/>
</dbReference>
<dbReference type="SMART" id="SM00271">
    <property type="entry name" value="DnaJ"/>
    <property type="match status" value="1"/>
</dbReference>
<dbReference type="SUPFAM" id="SSF46565">
    <property type="entry name" value="Chaperone J-domain"/>
    <property type="match status" value="1"/>
</dbReference>
<dbReference type="SUPFAM" id="SSF57938">
    <property type="entry name" value="DnaJ/Hsp40 cysteine-rich domain"/>
    <property type="match status" value="1"/>
</dbReference>
<dbReference type="SUPFAM" id="SSF49493">
    <property type="entry name" value="HSP40/DnaJ peptide-binding domain"/>
    <property type="match status" value="2"/>
</dbReference>
<dbReference type="PROSITE" id="PS00636">
    <property type="entry name" value="DNAJ_1"/>
    <property type="match status" value="1"/>
</dbReference>
<dbReference type="PROSITE" id="PS50076">
    <property type="entry name" value="DNAJ_2"/>
    <property type="match status" value="1"/>
</dbReference>
<dbReference type="PROSITE" id="PS51188">
    <property type="entry name" value="ZF_CR"/>
    <property type="match status" value="1"/>
</dbReference>
<protein>
    <recommendedName>
        <fullName>Mitochondrial protein import protein mas5</fullName>
    </recommendedName>
</protein>
<evidence type="ECO:0000250" key="1"/>
<evidence type="ECO:0000256" key="2">
    <source>
        <dbReference type="SAM" id="MobiDB-lite"/>
    </source>
</evidence>
<evidence type="ECO:0000269" key="3">
    <source>
    </source>
</evidence>
<evidence type="ECO:0000269" key="4">
    <source>
    </source>
</evidence>
<sequence>MVKETKLYEVLNVDVTASQAELKKAYRKLALKYHPDKNPNAGDKFKEISRAYEILADEEKRATYDRFGEEGLQGGGADGGMSADDLFASFFGGGMFGGGMPRGPRKGKDLVHTIKVTLEDLYRGKTTKLALQKKVICPKCSGRGGKEGSVKSCASCNGSGVKFITRAMGPMIQRMQMTCPDCNGAGETIRDEDRCKECDGAKVISQRKILTVHVEKGMHNGQKIVFKEEGEQAPGIIPGDVIFVIDQKEHPRFKRSGDHLFYEAHVDLLTALAGGQIVVEHLDDRWLTIPIIPGECIRPNELKVLPGQGMLSQRHHQPGNLYIRFHVDFPEPNFATPEQLALLEKALPPRKIESAPKNAHTEECVLATVDPTEKVRIDNNVDPTTATSMDEDEDEEGGHPGVQCAQQ</sequence>
<gene>
    <name type="primary">mas5</name>
    <name type="ORF">SPBC1734.11</name>
</gene>
<name>MAS5_SCHPO</name>
<organism>
    <name type="scientific">Schizosaccharomyces pombe (strain 972 / ATCC 24843)</name>
    <name type="common">Fission yeast</name>
    <dbReference type="NCBI Taxonomy" id="284812"/>
    <lineage>
        <taxon>Eukaryota</taxon>
        <taxon>Fungi</taxon>
        <taxon>Dikarya</taxon>
        <taxon>Ascomycota</taxon>
        <taxon>Taphrinomycotina</taxon>
        <taxon>Schizosaccharomycetes</taxon>
        <taxon>Schizosaccharomycetales</taxon>
        <taxon>Schizosaccharomycetaceae</taxon>
        <taxon>Schizosaccharomyces</taxon>
    </lineage>
</organism>